<organism>
    <name type="scientific">Drosophila melanogaster</name>
    <name type="common">Fruit fly</name>
    <dbReference type="NCBI Taxonomy" id="7227"/>
    <lineage>
        <taxon>Eukaryota</taxon>
        <taxon>Metazoa</taxon>
        <taxon>Ecdysozoa</taxon>
        <taxon>Arthropoda</taxon>
        <taxon>Hexapoda</taxon>
        <taxon>Insecta</taxon>
        <taxon>Pterygota</taxon>
        <taxon>Neoptera</taxon>
        <taxon>Endopterygota</taxon>
        <taxon>Diptera</taxon>
        <taxon>Brachycera</taxon>
        <taxon>Muscomorpha</taxon>
        <taxon>Ephydroidea</taxon>
        <taxon>Drosophilidae</taxon>
        <taxon>Drosophila</taxon>
        <taxon>Sophophora</taxon>
    </lineage>
</organism>
<feature type="chain" id="PRO_0000173821" description="Probable 26S proteasome non-ATPase regulatory subunit 3">
    <location>
        <begin position="1"/>
        <end position="494"/>
    </location>
</feature>
<feature type="domain" description="PCI" evidence="2">
    <location>
        <begin position="247"/>
        <end position="426"/>
    </location>
</feature>
<feature type="region of interest" description="Disordered" evidence="3">
    <location>
        <begin position="458"/>
        <end position="494"/>
    </location>
</feature>
<feature type="compositionally biased region" description="Basic and acidic residues" evidence="3">
    <location>
        <begin position="462"/>
        <end position="486"/>
    </location>
</feature>
<feature type="sequence conflict" description="In Ref. 4; AAL90075." evidence="4" ref="4">
    <original>D</original>
    <variation>H</variation>
    <location>
        <position position="204"/>
    </location>
</feature>
<reference key="1">
    <citation type="journal article" date="1991" name="Gene">
        <title>Drosophila melanogaster diphenol oxidase A2: gene structure and homology with the mouse mast-cell tum- transplantation antigen, P91A.</title>
        <authorList>
            <person name="Pentz E.S."/>
            <person name="Wright T.R.F."/>
        </authorList>
    </citation>
    <scope>NUCLEOTIDE SEQUENCE [GENOMIC DNA]</scope>
</reference>
<reference key="2">
    <citation type="journal article" date="2000" name="Science">
        <title>The genome sequence of Drosophila melanogaster.</title>
        <authorList>
            <person name="Adams M.D."/>
            <person name="Celniker S.E."/>
            <person name="Holt R.A."/>
            <person name="Evans C.A."/>
            <person name="Gocayne J.D."/>
            <person name="Amanatides P.G."/>
            <person name="Scherer S.E."/>
            <person name="Li P.W."/>
            <person name="Hoskins R.A."/>
            <person name="Galle R.F."/>
            <person name="George R.A."/>
            <person name="Lewis S.E."/>
            <person name="Richards S."/>
            <person name="Ashburner M."/>
            <person name="Henderson S.N."/>
            <person name="Sutton G.G."/>
            <person name="Wortman J.R."/>
            <person name="Yandell M.D."/>
            <person name="Zhang Q."/>
            <person name="Chen L.X."/>
            <person name="Brandon R.C."/>
            <person name="Rogers Y.-H.C."/>
            <person name="Blazej R.G."/>
            <person name="Champe M."/>
            <person name="Pfeiffer B.D."/>
            <person name="Wan K.H."/>
            <person name="Doyle C."/>
            <person name="Baxter E.G."/>
            <person name="Helt G."/>
            <person name="Nelson C.R."/>
            <person name="Miklos G.L.G."/>
            <person name="Abril J.F."/>
            <person name="Agbayani A."/>
            <person name="An H.-J."/>
            <person name="Andrews-Pfannkoch C."/>
            <person name="Baldwin D."/>
            <person name="Ballew R.M."/>
            <person name="Basu A."/>
            <person name="Baxendale J."/>
            <person name="Bayraktaroglu L."/>
            <person name="Beasley E.M."/>
            <person name="Beeson K.Y."/>
            <person name="Benos P.V."/>
            <person name="Berman B.P."/>
            <person name="Bhandari D."/>
            <person name="Bolshakov S."/>
            <person name="Borkova D."/>
            <person name="Botchan M.R."/>
            <person name="Bouck J."/>
            <person name="Brokstein P."/>
            <person name="Brottier P."/>
            <person name="Burtis K.C."/>
            <person name="Busam D.A."/>
            <person name="Butler H."/>
            <person name="Cadieu E."/>
            <person name="Center A."/>
            <person name="Chandra I."/>
            <person name="Cherry J.M."/>
            <person name="Cawley S."/>
            <person name="Dahlke C."/>
            <person name="Davenport L.B."/>
            <person name="Davies P."/>
            <person name="de Pablos B."/>
            <person name="Delcher A."/>
            <person name="Deng Z."/>
            <person name="Mays A.D."/>
            <person name="Dew I."/>
            <person name="Dietz S.M."/>
            <person name="Dodson K."/>
            <person name="Doup L.E."/>
            <person name="Downes M."/>
            <person name="Dugan-Rocha S."/>
            <person name="Dunkov B.C."/>
            <person name="Dunn P."/>
            <person name="Durbin K.J."/>
            <person name="Evangelista C.C."/>
            <person name="Ferraz C."/>
            <person name="Ferriera S."/>
            <person name="Fleischmann W."/>
            <person name="Fosler C."/>
            <person name="Gabrielian A.E."/>
            <person name="Garg N.S."/>
            <person name="Gelbart W.M."/>
            <person name="Glasser K."/>
            <person name="Glodek A."/>
            <person name="Gong F."/>
            <person name="Gorrell J.H."/>
            <person name="Gu Z."/>
            <person name="Guan P."/>
            <person name="Harris M."/>
            <person name="Harris N.L."/>
            <person name="Harvey D.A."/>
            <person name="Heiman T.J."/>
            <person name="Hernandez J.R."/>
            <person name="Houck J."/>
            <person name="Hostin D."/>
            <person name="Houston K.A."/>
            <person name="Howland T.J."/>
            <person name="Wei M.-H."/>
            <person name="Ibegwam C."/>
            <person name="Jalali M."/>
            <person name="Kalush F."/>
            <person name="Karpen G.H."/>
            <person name="Ke Z."/>
            <person name="Kennison J.A."/>
            <person name="Ketchum K.A."/>
            <person name="Kimmel B.E."/>
            <person name="Kodira C.D."/>
            <person name="Kraft C.L."/>
            <person name="Kravitz S."/>
            <person name="Kulp D."/>
            <person name="Lai Z."/>
            <person name="Lasko P."/>
            <person name="Lei Y."/>
            <person name="Levitsky A.A."/>
            <person name="Li J.H."/>
            <person name="Li Z."/>
            <person name="Liang Y."/>
            <person name="Lin X."/>
            <person name="Liu X."/>
            <person name="Mattei B."/>
            <person name="McIntosh T.C."/>
            <person name="McLeod M.P."/>
            <person name="McPherson D."/>
            <person name="Merkulov G."/>
            <person name="Milshina N.V."/>
            <person name="Mobarry C."/>
            <person name="Morris J."/>
            <person name="Moshrefi A."/>
            <person name="Mount S.M."/>
            <person name="Moy M."/>
            <person name="Murphy B."/>
            <person name="Murphy L."/>
            <person name="Muzny D.M."/>
            <person name="Nelson D.L."/>
            <person name="Nelson D.R."/>
            <person name="Nelson K.A."/>
            <person name="Nixon K."/>
            <person name="Nusskern D.R."/>
            <person name="Pacleb J.M."/>
            <person name="Palazzolo M."/>
            <person name="Pittman G.S."/>
            <person name="Pan S."/>
            <person name="Pollard J."/>
            <person name="Puri V."/>
            <person name="Reese M.G."/>
            <person name="Reinert K."/>
            <person name="Remington K."/>
            <person name="Saunders R.D.C."/>
            <person name="Scheeler F."/>
            <person name="Shen H."/>
            <person name="Shue B.C."/>
            <person name="Siden-Kiamos I."/>
            <person name="Simpson M."/>
            <person name="Skupski M.P."/>
            <person name="Smith T.J."/>
            <person name="Spier E."/>
            <person name="Spradling A.C."/>
            <person name="Stapleton M."/>
            <person name="Strong R."/>
            <person name="Sun E."/>
            <person name="Svirskas R."/>
            <person name="Tector C."/>
            <person name="Turner R."/>
            <person name="Venter E."/>
            <person name="Wang A.H."/>
            <person name="Wang X."/>
            <person name="Wang Z.-Y."/>
            <person name="Wassarman D.A."/>
            <person name="Weinstock G.M."/>
            <person name="Weissenbach J."/>
            <person name="Williams S.M."/>
            <person name="Woodage T."/>
            <person name="Worley K.C."/>
            <person name="Wu D."/>
            <person name="Yang S."/>
            <person name="Yao Q.A."/>
            <person name="Ye J."/>
            <person name="Yeh R.-F."/>
            <person name="Zaveri J.S."/>
            <person name="Zhan M."/>
            <person name="Zhang G."/>
            <person name="Zhao Q."/>
            <person name="Zheng L."/>
            <person name="Zheng X.H."/>
            <person name="Zhong F.N."/>
            <person name="Zhong W."/>
            <person name="Zhou X."/>
            <person name="Zhu S.C."/>
            <person name="Zhu X."/>
            <person name="Smith H.O."/>
            <person name="Gibbs R.A."/>
            <person name="Myers E.W."/>
            <person name="Rubin G.M."/>
            <person name="Venter J.C."/>
        </authorList>
    </citation>
    <scope>NUCLEOTIDE SEQUENCE [LARGE SCALE GENOMIC DNA]</scope>
    <source>
        <strain>Berkeley</strain>
    </source>
</reference>
<reference key="3">
    <citation type="journal article" date="2002" name="Genome Biol.">
        <title>Annotation of the Drosophila melanogaster euchromatic genome: a systematic review.</title>
        <authorList>
            <person name="Misra S."/>
            <person name="Crosby M.A."/>
            <person name="Mungall C.J."/>
            <person name="Matthews B.B."/>
            <person name="Campbell K.S."/>
            <person name="Hradecky P."/>
            <person name="Huang Y."/>
            <person name="Kaminker J.S."/>
            <person name="Millburn G.H."/>
            <person name="Prochnik S.E."/>
            <person name="Smith C.D."/>
            <person name="Tupy J.L."/>
            <person name="Whitfield E.J."/>
            <person name="Bayraktaroglu L."/>
            <person name="Berman B.P."/>
            <person name="Bettencourt B.R."/>
            <person name="Celniker S.E."/>
            <person name="de Grey A.D.N.J."/>
            <person name="Drysdale R.A."/>
            <person name="Harris N.L."/>
            <person name="Richter J."/>
            <person name="Russo S."/>
            <person name="Schroeder A.J."/>
            <person name="Shu S.Q."/>
            <person name="Stapleton M."/>
            <person name="Yamada C."/>
            <person name="Ashburner M."/>
            <person name="Gelbart W.M."/>
            <person name="Rubin G.M."/>
            <person name="Lewis S.E."/>
        </authorList>
    </citation>
    <scope>GENOME REANNOTATION</scope>
    <source>
        <strain>Berkeley</strain>
    </source>
</reference>
<reference key="4">
    <citation type="journal article" date="2002" name="Genome Biol.">
        <title>A Drosophila full-length cDNA resource.</title>
        <authorList>
            <person name="Stapleton M."/>
            <person name="Carlson J.W."/>
            <person name="Brokstein P."/>
            <person name="Yu C."/>
            <person name="Champe M."/>
            <person name="George R.A."/>
            <person name="Guarin H."/>
            <person name="Kronmiller B."/>
            <person name="Pacleb J.M."/>
            <person name="Park S."/>
            <person name="Wan K.H."/>
            <person name="Rubin G.M."/>
            <person name="Celniker S.E."/>
        </authorList>
    </citation>
    <scope>NUCLEOTIDE SEQUENCE [LARGE SCALE MRNA]</scope>
    <source>
        <strain>Berkeley</strain>
        <tissue>Testis</tissue>
    </source>
</reference>
<reference key="5">
    <citation type="submission" date="2008-09" db="EMBL/GenBank/DDBJ databases">
        <authorList>
            <person name="Carlson J.W."/>
            <person name="Booth B."/>
            <person name="Frise E."/>
            <person name="Park S."/>
            <person name="Wan K.H."/>
            <person name="Yu C."/>
            <person name="Celniker S.E."/>
        </authorList>
    </citation>
    <scope>NUCLEOTIDE SEQUENCE [LARGE SCALE MRNA]</scope>
    <source>
        <strain>Berkeley</strain>
    </source>
</reference>
<reference key="6">
    <citation type="journal article" date="2002" name="Insect Mol. Biol.">
        <title>Expression of proteasome subunit isoforms during spermatogenesis in Drosophila melanogaster.</title>
        <authorList>
            <person name="Ma J."/>
            <person name="Katz E."/>
            <person name="Belote J.M."/>
        </authorList>
    </citation>
    <scope>IDENTIFICATION</scope>
</reference>
<evidence type="ECO:0000250" key="1"/>
<evidence type="ECO:0000255" key="2">
    <source>
        <dbReference type="PROSITE-ProRule" id="PRU01185"/>
    </source>
</evidence>
<evidence type="ECO:0000256" key="3">
    <source>
        <dbReference type="SAM" id="MobiDB-lite"/>
    </source>
</evidence>
<evidence type="ECO:0000305" key="4"/>
<evidence type="ECO:0000305" key="5">
    <source>
    </source>
</evidence>
<comment type="function">
    <text evidence="1">Acts as a regulatory subunit of the 26 proteasome which is involved in the ATP-dependent degradation of ubiquitinated proteins.</text>
</comment>
<comment type="subunit">
    <text evidence="1">The 26S proteasome is composed of a core protease, known as the 20S proteasome, capped at one or both ends by the 19S regulatory complex (RC). The RC is composed of at least 18 different subunits in two subcomplexes, the base and the lid, which form the portions proximal and distal to the 20S proteolytic core, respectively (By similarity).</text>
</comment>
<comment type="tissue specificity">
    <text>Blood (crystal) cells and cuticle.</text>
</comment>
<comment type="similarity">
    <text evidence="4">Belongs to the proteasome subunit S3 family.</text>
</comment>
<comment type="caution">
    <text evidence="5">Was originally thought to be the diphenol oxidase A2 component involved in catecholamine metabolism, melanin formation, and sclerotization of the cuticle.</text>
</comment>
<protein>
    <recommendedName>
        <fullName>Probable 26S proteasome non-ATPase regulatory subunit 3</fullName>
        <shortName>26S proteasome subunit S3</shortName>
    </recommendedName>
    <alternativeName>
        <fullName>Diphenol oxidase A2 component</fullName>
        <shortName>DOX-A2</shortName>
    </alternativeName>
    <alternativeName>
        <fullName>Regulatory particle non-ATPase 3</fullName>
    </alternativeName>
</protein>
<name>PSMD3_DROME</name>
<keyword id="KW-0647">Proteasome</keyword>
<keyword id="KW-1185">Reference proteome</keyword>
<accession>P25161</accession>
<accession>B5RIX5</accession>
<accession>Q8T460</accession>
<accession>Q9VJ09</accession>
<dbReference type="EMBL" id="M63010">
    <property type="protein sequence ID" value="AAB00732.1"/>
    <property type="molecule type" value="Genomic_DNA"/>
</dbReference>
<dbReference type="EMBL" id="AE014134">
    <property type="protein sequence ID" value="AAF53749.1"/>
    <property type="molecule type" value="Genomic_DNA"/>
</dbReference>
<dbReference type="EMBL" id="AY089337">
    <property type="protein sequence ID" value="AAL90075.1"/>
    <property type="molecule type" value="mRNA"/>
</dbReference>
<dbReference type="EMBL" id="BT044249">
    <property type="protein sequence ID" value="ACH92314.1"/>
    <property type="molecule type" value="mRNA"/>
</dbReference>
<dbReference type="PIR" id="JH0665">
    <property type="entry name" value="JH0665"/>
</dbReference>
<dbReference type="RefSeq" id="NP_001260557.1">
    <property type="nucleotide sequence ID" value="NM_001273628.1"/>
</dbReference>
<dbReference type="RefSeq" id="NP_477300.1">
    <property type="nucleotide sequence ID" value="NM_057952.4"/>
</dbReference>
<dbReference type="SMR" id="P25161"/>
<dbReference type="BioGRID" id="61163">
    <property type="interactions" value="29"/>
</dbReference>
<dbReference type="ComplexPortal" id="CPX-9070">
    <property type="entry name" value="26S proteasome complex"/>
</dbReference>
<dbReference type="ComplexPortal" id="CPX-9087">
    <property type="entry name" value="26S proteasome complex, testis-specific variant"/>
</dbReference>
<dbReference type="DIP" id="DIP-18295N"/>
<dbReference type="FunCoup" id="P25161">
    <property type="interactions" value="1677"/>
</dbReference>
<dbReference type="IntAct" id="P25161">
    <property type="interactions" value="72"/>
</dbReference>
<dbReference type="STRING" id="7227.FBpp0291495"/>
<dbReference type="GlyGen" id="P25161">
    <property type="glycosylation" value="1 site"/>
</dbReference>
<dbReference type="PaxDb" id="7227-FBpp0291495"/>
<dbReference type="DNASU" id="35176"/>
<dbReference type="EnsemblMetazoa" id="FBtr0302289">
    <property type="protein sequence ID" value="FBpp0291495"/>
    <property type="gene ID" value="FBgn0261396"/>
</dbReference>
<dbReference type="EnsemblMetazoa" id="FBtr0336843">
    <property type="protein sequence ID" value="FBpp0307804"/>
    <property type="gene ID" value="FBgn0261396"/>
</dbReference>
<dbReference type="GeneID" id="35176"/>
<dbReference type="KEGG" id="dme:Dmel_CG42641"/>
<dbReference type="AGR" id="FB:FBgn0261396"/>
<dbReference type="CTD" id="35176"/>
<dbReference type="FlyBase" id="FBgn0261396">
    <property type="gene designation" value="Rpn3"/>
</dbReference>
<dbReference type="VEuPathDB" id="VectorBase:FBgn0261396"/>
<dbReference type="eggNOG" id="KOG2581">
    <property type="taxonomic scope" value="Eukaryota"/>
</dbReference>
<dbReference type="GeneTree" id="ENSGT00940000153653"/>
<dbReference type="HOGENOM" id="CLU_019858_1_2_1"/>
<dbReference type="InParanoid" id="P25161"/>
<dbReference type="OMA" id="AKVYFYF"/>
<dbReference type="OrthoDB" id="1713558at2759"/>
<dbReference type="PhylomeDB" id="P25161"/>
<dbReference type="BRENDA" id="3.4.25.1">
    <property type="organism ID" value="1994"/>
</dbReference>
<dbReference type="Reactome" id="R-DME-1169091">
    <property type="pathway name" value="Activation of NF-kappaB in B cells"/>
</dbReference>
<dbReference type="Reactome" id="R-DME-1234176">
    <property type="pathway name" value="Oxygen-dependent proline hydroxylation of Hypoxia-inducible Factor Alpha"/>
</dbReference>
<dbReference type="Reactome" id="R-DME-1236978">
    <property type="pathway name" value="Cross-presentation of soluble exogenous antigens (endosomes)"/>
</dbReference>
<dbReference type="Reactome" id="R-DME-174084">
    <property type="pathway name" value="Autodegradation of Cdh1 by Cdh1:APC/C"/>
</dbReference>
<dbReference type="Reactome" id="R-DME-174154">
    <property type="pathway name" value="APC/C:Cdc20 mediated degradation of Securin"/>
</dbReference>
<dbReference type="Reactome" id="R-DME-174178">
    <property type="pathway name" value="APC/C:Cdh1 mediated degradation of Cdc20 and other APC/C:Cdh1 targeted proteins in late mitosis/early G1"/>
</dbReference>
<dbReference type="Reactome" id="R-DME-174184">
    <property type="pathway name" value="Cdc20:Phospho-APC/C mediated degradation of Cyclin A"/>
</dbReference>
<dbReference type="Reactome" id="R-DME-187577">
    <property type="pathway name" value="SCF(Skp2)-mediated degradation of p27/p21"/>
</dbReference>
<dbReference type="Reactome" id="R-DME-195253">
    <property type="pathway name" value="Degradation of beta-catenin by the destruction complex"/>
</dbReference>
<dbReference type="Reactome" id="R-DME-202424">
    <property type="pathway name" value="Downstream TCR signaling"/>
</dbReference>
<dbReference type="Reactome" id="R-DME-209360">
    <property type="pathway name" value="Ubiquitination and proteolysis of phosphorylated CI"/>
</dbReference>
<dbReference type="Reactome" id="R-DME-209406">
    <property type="pathway name" value="Degradation of NF-kappa-B inhibitor, CACT"/>
</dbReference>
<dbReference type="Reactome" id="R-DME-209461">
    <property type="pathway name" value="Ubiquitination and degradation of phosphorylated ARM"/>
</dbReference>
<dbReference type="Reactome" id="R-DME-216167">
    <property type="pathway name" value="Nuclear CI is degraded"/>
</dbReference>
<dbReference type="Reactome" id="R-DME-2467813">
    <property type="pathway name" value="Separation of Sister Chromatids"/>
</dbReference>
<dbReference type="Reactome" id="R-DME-2871837">
    <property type="pathway name" value="FCERI mediated NF-kB activation"/>
</dbReference>
<dbReference type="Reactome" id="R-DME-350562">
    <property type="pathway name" value="Regulation of ornithine decarboxylase (ODC)"/>
</dbReference>
<dbReference type="Reactome" id="R-DME-382556">
    <property type="pathway name" value="ABC-family proteins mediated transport"/>
</dbReference>
<dbReference type="Reactome" id="R-DME-432395">
    <property type="pathway name" value="Degradation of TIM"/>
</dbReference>
<dbReference type="Reactome" id="R-DME-432524">
    <property type="pathway name" value="Degradation of PER"/>
</dbReference>
<dbReference type="Reactome" id="R-DME-432626">
    <property type="pathway name" value="Circadian Clock pathway"/>
</dbReference>
<dbReference type="Reactome" id="R-DME-450408">
    <property type="pathway name" value="AUF1 (hnRNP D0) binds and destabilizes mRNA"/>
</dbReference>
<dbReference type="Reactome" id="R-DME-4608870">
    <property type="pathway name" value="Asymmetric localization of PCP proteins"/>
</dbReference>
<dbReference type="Reactome" id="R-DME-4641257">
    <property type="pathway name" value="Degradation of AXIN"/>
</dbReference>
<dbReference type="Reactome" id="R-DME-4641258">
    <property type="pathway name" value="Degradation of DVL"/>
</dbReference>
<dbReference type="Reactome" id="R-DME-5358346">
    <property type="pathway name" value="Hedgehog ligand biogenesis"/>
</dbReference>
<dbReference type="Reactome" id="R-DME-538864">
    <property type="pathway name" value="Degradation of CRY"/>
</dbReference>
<dbReference type="Reactome" id="R-DME-5607761">
    <property type="pathway name" value="Dectin-1 mediated noncanonical NF-kB signaling"/>
</dbReference>
<dbReference type="Reactome" id="R-DME-5607764">
    <property type="pathway name" value="CLEC7A (Dectin-1) signaling"/>
</dbReference>
<dbReference type="Reactome" id="R-DME-5610780">
    <property type="pathway name" value="Degradation of GLI1 by the proteasome"/>
</dbReference>
<dbReference type="Reactome" id="R-DME-5610785">
    <property type="pathway name" value="GLI3 is processed to GLI3R by the proteasome"/>
</dbReference>
<dbReference type="Reactome" id="R-DME-5632684">
    <property type="pathway name" value="Hedgehog 'on' state"/>
</dbReference>
<dbReference type="Reactome" id="R-DME-5658442">
    <property type="pathway name" value="Regulation of RAS by GAPs"/>
</dbReference>
<dbReference type="Reactome" id="R-DME-5676590">
    <property type="pathway name" value="NIK--&gt;noncanonical NF-kB signaling"/>
</dbReference>
<dbReference type="Reactome" id="R-DME-5689603">
    <property type="pathway name" value="UCH proteinases"/>
</dbReference>
<dbReference type="Reactome" id="R-DME-5689880">
    <property type="pathway name" value="Ub-specific processing proteases"/>
</dbReference>
<dbReference type="Reactome" id="R-DME-6798695">
    <property type="pathway name" value="Neutrophil degranulation"/>
</dbReference>
<dbReference type="Reactome" id="R-DME-68949">
    <property type="pathway name" value="Orc1 removal from chromatin"/>
</dbReference>
<dbReference type="Reactome" id="R-DME-69017">
    <property type="pathway name" value="CDK-mediated phosphorylation and removal of Cdc6"/>
</dbReference>
<dbReference type="Reactome" id="R-DME-69601">
    <property type="pathway name" value="Ubiquitin Mediated Degradation of Phosphorylated Cdc25A"/>
</dbReference>
<dbReference type="Reactome" id="R-DME-75815">
    <property type="pathway name" value="Ubiquitin-dependent degradation of Cyclin D"/>
</dbReference>
<dbReference type="Reactome" id="R-DME-8854050">
    <property type="pathway name" value="FBXL7 down-regulates AURKA during mitotic entry and in early mitosis"/>
</dbReference>
<dbReference type="Reactome" id="R-DME-8939236">
    <property type="pathway name" value="RUNX1 regulates transcription of genes involved in differentiation of HSCs"/>
</dbReference>
<dbReference type="Reactome" id="R-DME-8939902">
    <property type="pathway name" value="Regulation of RUNX2 expression and activity"/>
</dbReference>
<dbReference type="Reactome" id="R-DME-8941858">
    <property type="pathway name" value="Regulation of RUNX3 expression and activity"/>
</dbReference>
<dbReference type="Reactome" id="R-DME-8948751">
    <property type="pathway name" value="Regulation of PTEN stability and activity"/>
</dbReference>
<dbReference type="Reactome" id="R-DME-8951664">
    <property type="pathway name" value="Neddylation"/>
</dbReference>
<dbReference type="Reactome" id="R-DME-9020702">
    <property type="pathway name" value="Interleukin-1 signaling"/>
</dbReference>
<dbReference type="Reactome" id="R-DME-9755511">
    <property type="pathway name" value="KEAP1-NFE2L2 pathway"/>
</dbReference>
<dbReference type="Reactome" id="R-DME-9762114">
    <property type="pathway name" value="GSK3B and BTRC:CUL1-mediated-degradation of NFE2L2"/>
</dbReference>
<dbReference type="Reactome" id="R-DME-983168">
    <property type="pathway name" value="Antigen processing: Ubiquitination &amp; Proteasome degradation"/>
</dbReference>
<dbReference type="Reactome" id="R-DME-9907900">
    <property type="pathway name" value="Proteasome assembly"/>
</dbReference>
<dbReference type="BioGRID-ORCS" id="35176">
    <property type="hits" value="0 hits in 1 CRISPR screen"/>
</dbReference>
<dbReference type="ChiTaRS" id="Rpn3">
    <property type="organism name" value="fly"/>
</dbReference>
<dbReference type="GenomeRNAi" id="35176"/>
<dbReference type="PRO" id="PR:P25161"/>
<dbReference type="Proteomes" id="UP000000803">
    <property type="component" value="Chromosome 2L"/>
</dbReference>
<dbReference type="Bgee" id="FBgn0261396">
    <property type="expression patterns" value="Expressed in secondary oocyte and 157 other cell types or tissues"/>
</dbReference>
<dbReference type="ExpressionAtlas" id="P25161">
    <property type="expression patterns" value="baseline and differential"/>
</dbReference>
<dbReference type="GO" id="GO:0005829">
    <property type="term" value="C:cytosol"/>
    <property type="evidence" value="ECO:0000304"/>
    <property type="project" value="Reactome"/>
</dbReference>
<dbReference type="GO" id="GO:0005654">
    <property type="term" value="C:nucleoplasm"/>
    <property type="evidence" value="ECO:0000304"/>
    <property type="project" value="Reactome"/>
</dbReference>
<dbReference type="GO" id="GO:0000502">
    <property type="term" value="C:proteasome complex"/>
    <property type="evidence" value="ECO:0000314"/>
    <property type="project" value="FlyBase"/>
</dbReference>
<dbReference type="GO" id="GO:0005838">
    <property type="term" value="C:proteasome regulatory particle"/>
    <property type="evidence" value="ECO:0000314"/>
    <property type="project" value="FlyBase"/>
</dbReference>
<dbReference type="GO" id="GO:0008541">
    <property type="term" value="C:proteasome regulatory particle, lid subcomplex"/>
    <property type="evidence" value="ECO:0000250"/>
    <property type="project" value="FlyBase"/>
</dbReference>
<dbReference type="GO" id="GO:0030234">
    <property type="term" value="F:enzyme regulator activity"/>
    <property type="evidence" value="ECO:0007669"/>
    <property type="project" value="InterPro"/>
</dbReference>
<dbReference type="GO" id="GO:0008270">
    <property type="term" value="F:zinc ion binding"/>
    <property type="evidence" value="ECO:0000314"/>
    <property type="project" value="FlyBase"/>
</dbReference>
<dbReference type="GO" id="GO:0043161">
    <property type="term" value="P:proteasome-mediated ubiquitin-dependent protein catabolic process"/>
    <property type="evidence" value="ECO:0000305"/>
    <property type="project" value="FlyBase"/>
</dbReference>
<dbReference type="GO" id="GO:0042176">
    <property type="term" value="P:regulation of protein catabolic process"/>
    <property type="evidence" value="ECO:0007669"/>
    <property type="project" value="InterPro"/>
</dbReference>
<dbReference type="GO" id="GO:0006511">
    <property type="term" value="P:ubiquitin-dependent protein catabolic process"/>
    <property type="evidence" value="ECO:0000318"/>
    <property type="project" value="GO_Central"/>
</dbReference>
<dbReference type="InterPro" id="IPR013586">
    <property type="entry name" value="26S_Psome_reg_C"/>
</dbReference>
<dbReference type="InterPro" id="IPR050756">
    <property type="entry name" value="CSN3"/>
</dbReference>
<dbReference type="InterPro" id="IPR000717">
    <property type="entry name" value="PCI_dom"/>
</dbReference>
<dbReference type="InterPro" id="IPR036390">
    <property type="entry name" value="WH_DNA-bd_sf"/>
</dbReference>
<dbReference type="PANTHER" id="PTHR10758:SF2">
    <property type="entry name" value="26S PROTEASOME NON-ATPASE REGULATORY SUBUNIT 3"/>
    <property type="match status" value="1"/>
</dbReference>
<dbReference type="PANTHER" id="PTHR10758">
    <property type="entry name" value="26S PROTEASOME NON-ATPASE REGULATORY SUBUNIT 3/COP9 SIGNALOSOME COMPLEX SUBUNIT 3"/>
    <property type="match status" value="1"/>
</dbReference>
<dbReference type="Pfam" id="PF01399">
    <property type="entry name" value="PCI"/>
    <property type="match status" value="1"/>
</dbReference>
<dbReference type="Pfam" id="PF08375">
    <property type="entry name" value="Rpn3_C"/>
    <property type="match status" value="1"/>
</dbReference>
<dbReference type="SMART" id="SM00753">
    <property type="entry name" value="PAM"/>
    <property type="match status" value="1"/>
</dbReference>
<dbReference type="SMART" id="SM00088">
    <property type="entry name" value="PINT"/>
    <property type="match status" value="1"/>
</dbReference>
<dbReference type="SUPFAM" id="SSF46785">
    <property type="entry name" value="Winged helix' DNA-binding domain"/>
    <property type="match status" value="1"/>
</dbReference>
<dbReference type="PROSITE" id="PS50250">
    <property type="entry name" value="PCI"/>
    <property type="match status" value="1"/>
</dbReference>
<gene>
    <name type="primary">Rpn3</name>
    <name type="synonym">Dox-A2</name>
    <name type="ORF">CG42641</name>
</gene>
<proteinExistence type="evidence at transcript level"/>
<sequence length="494" mass="56004">MTNATDIGANDVEMEVDPTAETLADEKKNQDVAAVQEIREQIRQIEKGVASKESRFILRVLRNLPNTRRKLNGVVFRNLAQSIYPAGADREAAVALMPAVEKDATELPDVPKKQVATKAPIAEVDAYFYLLLLVKLIDASDLKRAGISADALMAKISIQNRRTLDLIGAKSYFYFSRVAELKNSLEGIRSFLHARLRTATLRNDFEGQAVLINCLLRNYLHYALYDQADKLVKKSVYPESASNNEWARFLYYLGRIKAAKLEYSDAHKHLVQALRKSPQHAAIGFRQTVQKLIIVVELLLGNIPERVVFRQAGLRQSLGAYFQLTQAVRLGNLKRFGDVVSQYGPKFQLDHTFTLIIRLRHNVIKTAIRSIGLSYSRISPQDIAKRLMLDSAEDAEFIVSKAIRDGVIEATLDPAQNFMRSKESTDIYSTREPQLAFHERISFCLNLHNQSVKAMRYPPKSYGKDLESAEERREREQQDLELAKEMAEDDEDGF</sequence>